<evidence type="ECO:0000250" key="1"/>
<evidence type="ECO:0000305" key="2"/>
<keyword id="KW-0496">Mitochondrion</keyword>
<accession>A6ZWZ7</accession>
<feature type="chain" id="PRO_0000405472" description="Required for respiratory growth protein 8, mitochondrial">
    <location>
        <begin position="1"/>
        <end position="277"/>
    </location>
</feature>
<gene>
    <name type="primary">RRG8</name>
    <name type="ORF">SCY_5824</name>
</gene>
<name>RRG8_YEAS7</name>
<comment type="function">
    <text evidence="1">Required for respiratory activity and maintenance and expression of the mitochondrial genome.</text>
</comment>
<comment type="subcellular location">
    <subcellularLocation>
        <location evidence="1">Mitochondrion</location>
    </subcellularLocation>
</comment>
<comment type="similarity">
    <text evidence="2">Belongs to the RRG8 family.</text>
</comment>
<dbReference type="EMBL" id="AAFW02000135">
    <property type="protein sequence ID" value="EDN61239.1"/>
    <property type="molecule type" value="Genomic_DNA"/>
</dbReference>
<dbReference type="HOGENOM" id="CLU_090059_0_0_1"/>
<dbReference type="Proteomes" id="UP000007060">
    <property type="component" value="Unassembled WGS sequence"/>
</dbReference>
<dbReference type="GO" id="GO:0005739">
    <property type="term" value="C:mitochondrion"/>
    <property type="evidence" value="ECO:0007669"/>
    <property type="project" value="UniProtKB-SubCell"/>
</dbReference>
<dbReference type="GO" id="GO:0000002">
    <property type="term" value="P:mitochondrial genome maintenance"/>
    <property type="evidence" value="ECO:0007669"/>
    <property type="project" value="InterPro"/>
</dbReference>
<dbReference type="InterPro" id="IPR031415">
    <property type="entry name" value="Rrg8"/>
</dbReference>
<dbReference type="Pfam" id="PF17068">
    <property type="entry name" value="RRG8"/>
    <property type="match status" value="1"/>
</dbReference>
<organism>
    <name type="scientific">Saccharomyces cerevisiae (strain YJM789)</name>
    <name type="common">Baker's yeast</name>
    <dbReference type="NCBI Taxonomy" id="307796"/>
    <lineage>
        <taxon>Eukaryota</taxon>
        <taxon>Fungi</taxon>
        <taxon>Dikarya</taxon>
        <taxon>Ascomycota</taxon>
        <taxon>Saccharomycotina</taxon>
        <taxon>Saccharomycetes</taxon>
        <taxon>Saccharomycetales</taxon>
        <taxon>Saccharomycetaceae</taxon>
        <taxon>Saccharomyces</taxon>
    </lineage>
</organism>
<proteinExistence type="inferred from homology"/>
<reference key="1">
    <citation type="journal article" date="2007" name="Proc. Natl. Acad. Sci. U.S.A.">
        <title>Genome sequencing and comparative analysis of Saccharomyces cerevisiae strain YJM789.</title>
        <authorList>
            <person name="Wei W."/>
            <person name="McCusker J.H."/>
            <person name="Hyman R.W."/>
            <person name="Jones T."/>
            <person name="Ning Y."/>
            <person name="Cao Z."/>
            <person name="Gu Z."/>
            <person name="Bruno D."/>
            <person name="Miranda M."/>
            <person name="Nguyen M."/>
            <person name="Wilhelmy J."/>
            <person name="Komp C."/>
            <person name="Tamse R."/>
            <person name="Wang X."/>
            <person name="Jia P."/>
            <person name="Luedi P."/>
            <person name="Oefner P.J."/>
            <person name="David L."/>
            <person name="Dietrich F.S."/>
            <person name="Li Y."/>
            <person name="Davis R.W."/>
            <person name="Steinmetz L.M."/>
        </authorList>
    </citation>
    <scope>NUCLEOTIDE SEQUENCE [LARGE SCALE GENOMIC DNA]</scope>
    <source>
        <strain>YJM789</strain>
    </source>
</reference>
<protein>
    <recommendedName>
        <fullName>Required for respiratory growth protein 8, mitochondrial</fullName>
    </recommendedName>
</protein>
<sequence length="277" mass="31147">MGLPKSAYKKLLIDCPTRVINKNCAQRVKDVSPLITNFEKWSDKRKKLYFKDEEEMVGQFHLENFNLKNNLYGRLLASPMRAEKISKLKSCRELLIPLKVVPSTGKDQHADKDKLKLVPTLDYSKSYKSSYVLNSASIVQDNLAAATSWFPISVLQTSTPKSLEVDSSTFITEYNANLHAFIKARLSVIPNVGPSSINRVLLICDKRKTPPIEIQVVSHGKGLPITQSVFNLGYLHEPTLEAIVSKDAVTKGIYLDADNDKDLIKHLYSTLLFHSVN</sequence>